<sequence length="9" mass="1165">YSLRARPRF</sequence>
<protein>
    <recommendedName>
        <fullName>Peptide tyrosine phenylalanine 4</fullName>
    </recommendedName>
    <alternativeName>
        <fullName>Pem-PYF4</fullName>
    </alternativeName>
</protein>
<feature type="peptide" id="PRO_0000044302" description="Peptide tyrosine phenylalanine 4">
    <location>
        <begin position="1"/>
        <end position="9"/>
    </location>
</feature>
<feature type="modified residue" description="Phenylalanine amide" evidence="1">
    <location>
        <position position="9"/>
    </location>
</feature>
<dbReference type="GO" id="GO:0005576">
    <property type="term" value="C:extracellular region"/>
    <property type="evidence" value="ECO:0007669"/>
    <property type="project" value="UniProtKB-SubCell"/>
</dbReference>
<dbReference type="GO" id="GO:0007218">
    <property type="term" value="P:neuropeptide signaling pathway"/>
    <property type="evidence" value="ECO:0007669"/>
    <property type="project" value="UniProtKB-KW"/>
</dbReference>
<organism>
    <name type="scientific">Penaeus monodon</name>
    <name type="common">Giant tiger prawn</name>
    <dbReference type="NCBI Taxonomy" id="6687"/>
    <lineage>
        <taxon>Eukaryota</taxon>
        <taxon>Metazoa</taxon>
        <taxon>Ecdysozoa</taxon>
        <taxon>Arthropoda</taxon>
        <taxon>Crustacea</taxon>
        <taxon>Multicrustacea</taxon>
        <taxon>Malacostraca</taxon>
        <taxon>Eumalacostraca</taxon>
        <taxon>Eucarida</taxon>
        <taxon>Decapoda</taxon>
        <taxon>Dendrobranchiata</taxon>
        <taxon>Penaeoidea</taxon>
        <taxon>Penaeidae</taxon>
        <taxon>Penaeus</taxon>
    </lineage>
</organism>
<keyword id="KW-0027">Amidation</keyword>
<keyword id="KW-0903">Direct protein sequencing</keyword>
<keyword id="KW-0527">Neuropeptide</keyword>
<keyword id="KW-0964">Secreted</keyword>
<proteinExistence type="evidence at protein level"/>
<reference key="1">
    <citation type="journal article" date="2002" name="Peptides">
        <title>Four novel PYFs: members of NPY/PP peptide superfamily from the eyestalk of the giant tiger prawn Penaeus monodon.</title>
        <authorList>
            <person name="Sithigorngul P."/>
            <person name="Pupuem J."/>
            <person name="Krungkasem C."/>
            <person name="Longyant S."/>
            <person name="Panchan N."/>
            <person name="Chaivisuthangkura P."/>
            <person name="Sithigorngul W."/>
            <person name="Petsom A."/>
        </authorList>
    </citation>
    <scope>PROTEIN SEQUENCE</scope>
    <scope>TISSUE SPECIFICITY</scope>
    <scope>MASS SPECTROMETRY</scope>
    <source>
        <tissue>Eyestalk</tissue>
    </source>
</reference>
<name>PYF4_PENMO</name>
<evidence type="ECO:0000255" key="1"/>
<evidence type="ECO:0000269" key="2">
    <source>
    </source>
</evidence>
<evidence type="ECO:0000305" key="3"/>
<accession>P84008</accession>
<comment type="function">
    <text>May act as a neurotransmitter, neuromodulator or neurohormone.</text>
</comment>
<comment type="subcellular location">
    <subcellularLocation>
        <location>Secreted</location>
    </subcellularLocation>
</comment>
<comment type="tissue specificity">
    <text evidence="2">Limited to neuronal cell bodies, neuronal processes and sinus gland.</text>
</comment>
<comment type="mass spectrometry" mass="1165.9" method="MALDI" evidence="2"/>
<comment type="similarity">
    <text evidence="3">Belongs to the NPY family.</text>
</comment>